<proteinExistence type="evidence at transcript level"/>
<accession>Q95266</accession>
<comment type="function">
    <text evidence="2 3">Calcium/calmodulin-dependent protein kinase involved in the regulation of Ca(2+) homeostatis and excitation-contraction coupling (ECC) in heart by targeting ion channels, transporters and accessory proteins involved in Ca(2+) influx into the myocyte, Ca(2+) release from the sarcoplasmic reticulum (SR), SR Ca(2+) uptake and Na(+) and K(+) channel transport. Targets also transcription factors and signaling molecules to regulate heart function. In its activated form, is involved in the pathogenesis of dilated cardiomyopathy and heart failure. Contributes to cardiac decompensation and heart failure by regulating SR Ca(2+) release via direct phosphorylation of RYR2 Ca(2+) channel on 'Ser-2808'. In the nucleus, phosphorylates the MEF2 repressor HDAC4, promoting its nuclear export and binding to 14-3-3 protein, and expression of MEF2 and genes involved in the hypertrophic program. Is essential for left ventricular remodeling responses to myocardial infarction. In pathological myocardial remodeling acts downstream of the beta adrenergic receptor signaling cascade to regulate key proteins involved in ECC. Regulates Ca(2+) influx to myocytes by binding and phosphorylating the L-type Ca(2+) channel subunit beta-2 CACNB2. In addition to Ca(2+) channels, can target and regulate the cardiac sarcolemmal Na(+) channel Nav1.5/SCN5A and the K+ channel Kv4.3/KCND3, which contribute to arrhythmogenesis in heart failure. Phosphorylates phospholamban (PLN/PLB), an endogenous inhibitor of SERCA2A/ATP2A2, contributing to the enhancement of SR Ca(2+) uptake that may be important in frequency-dependent acceleration of relaxation (FDAR) and maintenance of contractile function during acidosis. May participate in the modulation of skeletal muscle function in response to exercise, by regulating SR Ca(2+) transport through phosphorylation of PLN/PLB and triadin, a ryanodine receptor-coupling factor. In response to interferon-gamma (IFN-gamma) stimulation, catalyzes phosphorylation of STAT1, stimulating the JAK-STAT signaling pathway (By similarity).</text>
</comment>
<comment type="catalytic activity">
    <reaction>
        <text>L-seryl-[protein] + ATP = O-phospho-L-seryl-[protein] + ADP + H(+)</text>
        <dbReference type="Rhea" id="RHEA:17989"/>
        <dbReference type="Rhea" id="RHEA-COMP:9863"/>
        <dbReference type="Rhea" id="RHEA-COMP:11604"/>
        <dbReference type="ChEBI" id="CHEBI:15378"/>
        <dbReference type="ChEBI" id="CHEBI:29999"/>
        <dbReference type="ChEBI" id="CHEBI:30616"/>
        <dbReference type="ChEBI" id="CHEBI:83421"/>
        <dbReference type="ChEBI" id="CHEBI:456216"/>
        <dbReference type="EC" id="2.7.11.17"/>
    </reaction>
</comment>
<comment type="catalytic activity">
    <reaction>
        <text>L-threonyl-[protein] + ATP = O-phospho-L-threonyl-[protein] + ADP + H(+)</text>
        <dbReference type="Rhea" id="RHEA:46608"/>
        <dbReference type="Rhea" id="RHEA-COMP:11060"/>
        <dbReference type="Rhea" id="RHEA-COMP:11605"/>
        <dbReference type="ChEBI" id="CHEBI:15378"/>
        <dbReference type="ChEBI" id="CHEBI:30013"/>
        <dbReference type="ChEBI" id="CHEBI:30616"/>
        <dbReference type="ChEBI" id="CHEBI:61977"/>
        <dbReference type="ChEBI" id="CHEBI:456216"/>
        <dbReference type="EC" id="2.7.11.17"/>
    </reaction>
</comment>
<comment type="activity regulation">
    <text evidence="1">Activated by Ca(2+)/calmodulin. Binding of calmodulin results in conformational change that relieves intrasteric autoinhibition and allows autophosphorylation of Thr-287 which turns the kinase in a constitutively active form and confers to the kinase a Ca(2+)-independent activity (By similarity).</text>
</comment>
<comment type="subunit">
    <text evidence="1">CAMK2 is composed of 4 different chains: alpha (CAMK2A), beta (CAMK2B), gamma (CAMK2G), and delta (CAMK2D). The different isoforms assemble into homo- or heteromultimeric holoenzymes composed of 12 subunits with two hexameric rings stacked one on top of the other. Interacts with RRAD CACNB2 (By similarity).</text>
</comment>
<comment type="subcellular location">
    <subcellularLocation>
        <location evidence="6">Cell membrane</location>
        <location evidence="6">Sarcolemma</location>
        <topology evidence="6">Peripheral membrane protein</topology>
        <orientation evidence="6">Cytoplasmic side</orientation>
    </subcellularLocation>
    <subcellularLocation>
        <location evidence="6">Sarcoplasmic reticulum membrane</location>
        <topology evidence="6">Peripheral membrane protein</topology>
        <orientation evidence="6">Cytoplasmic side</orientation>
    </subcellularLocation>
</comment>
<comment type="domain">
    <text>The CAMK2 protein kinases contain a unique C-terminal subunit association domain responsible for oligomerization.</text>
</comment>
<comment type="PTM">
    <text evidence="1">Autophosphorylation of Thr-287 following activation by Ca(2+)/calmodulin. Phosphorylation of Thr-287 locks the kinase into an activated state (By similarity).</text>
</comment>
<comment type="similarity">
    <text evidence="6">Belongs to the protein kinase superfamily. CAMK Ser/Thr protein kinase family. CaMK subfamily.</text>
</comment>
<organism>
    <name type="scientific">Sus scrofa</name>
    <name type="common">Pig</name>
    <dbReference type="NCBI Taxonomy" id="9823"/>
    <lineage>
        <taxon>Eukaryota</taxon>
        <taxon>Metazoa</taxon>
        <taxon>Chordata</taxon>
        <taxon>Craniata</taxon>
        <taxon>Vertebrata</taxon>
        <taxon>Euteleostomi</taxon>
        <taxon>Mammalia</taxon>
        <taxon>Eutheria</taxon>
        <taxon>Laurasiatheria</taxon>
        <taxon>Artiodactyla</taxon>
        <taxon>Suina</taxon>
        <taxon>Suidae</taxon>
        <taxon>Sus</taxon>
    </lineage>
</organism>
<reference key="1">
    <citation type="journal article" date="1997" name="J. Biol. Chem.">
        <title>Novel Ca2+/calmodulin-dependent protein kinase II gamma-subunit variants expressed in vascular smooth muscle, brain, and cardiomyocytes.</title>
        <authorList>
            <person name="Singer H.A."/>
            <person name="Benscoter H.A."/>
            <person name="Schworer C.M."/>
        </authorList>
    </citation>
    <scope>NUCLEOTIDE SEQUENCE [MRNA]</scope>
    <source>
        <tissue>Aortic smooth muscle</tissue>
    </source>
</reference>
<sequence>MASTTTCTRFTDEYQLFEELGKGAFSVVRRCMKIPTGQEYAAKIINTKKLSARDHQKLEREARICRLLKHPNIVRLHDSISEEGFHYLVFDLVTGGELFEDIVAREYYSEADASHCIQQILESVNHCHLNGIVHRDLKPENLLLASKSKGAAVKLADFGLAIEVQGDQQAWFGFAGTPGYLSPEVLRKDPYGKPVDMWACGVILYILLVGYPPFWDEDQHRLYQQIKAGAYDFPSPEWDTVTPEAKDLINKMLTINPAKRITASEALKHPWICQRSTVASMMHRQETVDCLKKFNARRKLKGAILTTMLATRNFSAAKSLLKKPDGVKESTESSNTTIEDEDVKARKQEIIKVTEQLIEAINNGDFEAYTKICDPGLTAFEPEALGNLVEGMDFHRFYFENALSKSNKPIHTIILNPHVHLVGDDAACIAYIRLTQYMDGSGMPKTMQSEETRVWHRRDGKWQNVHFHRSGSPTVPIKPSCIPNGKENFSGSTSLWQNI</sequence>
<evidence type="ECO:0000250" key="1"/>
<evidence type="ECO:0000250" key="2">
    <source>
        <dbReference type="UniProtKB" id="Q13557"/>
    </source>
</evidence>
<evidence type="ECO:0000250" key="3">
    <source>
        <dbReference type="UniProtKB" id="Q6PHZ2"/>
    </source>
</evidence>
<evidence type="ECO:0000255" key="4">
    <source>
        <dbReference type="PROSITE-ProRule" id="PRU00159"/>
    </source>
</evidence>
<evidence type="ECO:0000255" key="5">
    <source>
        <dbReference type="PROSITE-ProRule" id="PRU10027"/>
    </source>
</evidence>
<evidence type="ECO:0000305" key="6"/>
<dbReference type="EC" id="2.7.11.17"/>
<dbReference type="EMBL" id="U73504">
    <property type="protein sequence ID" value="AAC48715.1"/>
    <property type="molecule type" value="mRNA"/>
</dbReference>
<dbReference type="RefSeq" id="NP_999546.1">
    <property type="nucleotide sequence ID" value="NM_214381.1"/>
</dbReference>
<dbReference type="SMR" id="Q95266"/>
<dbReference type="FunCoup" id="Q95266">
    <property type="interactions" value="773"/>
</dbReference>
<dbReference type="STRING" id="9823.ENSSSCP00000072072"/>
<dbReference type="GlyGen" id="Q95266">
    <property type="glycosylation" value="1 site"/>
</dbReference>
<dbReference type="PaxDb" id="9823-ENSSSCP00000009730"/>
<dbReference type="PeptideAtlas" id="Q95266"/>
<dbReference type="Ensembl" id="ENSSSCT00045024685.1">
    <property type="protein sequence ID" value="ENSSSCP00045017055.1"/>
    <property type="gene ID" value="ENSSSCG00045012550.1"/>
</dbReference>
<dbReference type="Ensembl" id="ENSSSCT00055047899.1">
    <property type="protein sequence ID" value="ENSSSCP00055038229.1"/>
    <property type="gene ID" value="ENSSSCG00055018512.1"/>
</dbReference>
<dbReference type="GeneID" id="397674"/>
<dbReference type="KEGG" id="ssc:397674"/>
<dbReference type="CTD" id="817"/>
<dbReference type="eggNOG" id="KOG0033">
    <property type="taxonomic scope" value="Eukaryota"/>
</dbReference>
<dbReference type="HOGENOM" id="CLU_000288_71_0_1"/>
<dbReference type="InParanoid" id="Q95266"/>
<dbReference type="OrthoDB" id="336747at2759"/>
<dbReference type="TreeFam" id="TF315229"/>
<dbReference type="Reactome" id="R-SSC-3371571">
    <property type="pathway name" value="HSF1-dependent transactivation"/>
</dbReference>
<dbReference type="Reactome" id="R-SSC-399719">
    <property type="pathway name" value="Trafficking of AMPA receptors"/>
</dbReference>
<dbReference type="Reactome" id="R-SSC-438066">
    <property type="pathway name" value="Unblocking of NMDA receptors, glutamate binding and activation"/>
</dbReference>
<dbReference type="Reactome" id="R-SSC-5578775">
    <property type="pathway name" value="Ion homeostasis"/>
</dbReference>
<dbReference type="Reactome" id="R-SSC-5673000">
    <property type="pathway name" value="RAF activation"/>
</dbReference>
<dbReference type="Reactome" id="R-SSC-5673001">
    <property type="pathway name" value="RAF/MAP kinase cascade"/>
</dbReference>
<dbReference type="Reactome" id="R-SSC-877300">
    <property type="pathway name" value="Interferon gamma signaling"/>
</dbReference>
<dbReference type="Reactome" id="R-SSC-936837">
    <property type="pathway name" value="Ion transport by P-type ATPases"/>
</dbReference>
<dbReference type="Proteomes" id="UP000008227">
    <property type="component" value="Unplaced"/>
</dbReference>
<dbReference type="Proteomes" id="UP000314985">
    <property type="component" value="Unplaced"/>
</dbReference>
<dbReference type="Proteomes" id="UP000694570">
    <property type="component" value="Unplaced"/>
</dbReference>
<dbReference type="Proteomes" id="UP000694571">
    <property type="component" value="Unplaced"/>
</dbReference>
<dbReference type="Proteomes" id="UP000694720">
    <property type="component" value="Unplaced"/>
</dbReference>
<dbReference type="Proteomes" id="UP000694722">
    <property type="component" value="Unplaced"/>
</dbReference>
<dbReference type="Proteomes" id="UP000694723">
    <property type="component" value="Unplaced"/>
</dbReference>
<dbReference type="Proteomes" id="UP000694724">
    <property type="component" value="Unplaced"/>
</dbReference>
<dbReference type="Proteomes" id="UP000694725">
    <property type="component" value="Unplaced"/>
</dbReference>
<dbReference type="Proteomes" id="UP000694726">
    <property type="component" value="Unplaced"/>
</dbReference>
<dbReference type="Proteomes" id="UP000694727">
    <property type="component" value="Unplaced"/>
</dbReference>
<dbReference type="Proteomes" id="UP000694728">
    <property type="component" value="Unplaced"/>
</dbReference>
<dbReference type="GO" id="GO:0005737">
    <property type="term" value="C:cytoplasm"/>
    <property type="evidence" value="ECO:0000318"/>
    <property type="project" value="GO_Central"/>
</dbReference>
<dbReference type="GO" id="GO:0043005">
    <property type="term" value="C:neuron projection"/>
    <property type="evidence" value="ECO:0000318"/>
    <property type="project" value="GO_Central"/>
</dbReference>
<dbReference type="GO" id="GO:0014069">
    <property type="term" value="C:postsynaptic density"/>
    <property type="evidence" value="ECO:0000318"/>
    <property type="project" value="GO_Central"/>
</dbReference>
<dbReference type="GO" id="GO:0042383">
    <property type="term" value="C:sarcolemma"/>
    <property type="evidence" value="ECO:0007669"/>
    <property type="project" value="UniProtKB-SubCell"/>
</dbReference>
<dbReference type="GO" id="GO:0033017">
    <property type="term" value="C:sarcoplasmic reticulum membrane"/>
    <property type="evidence" value="ECO:0007669"/>
    <property type="project" value="UniProtKB-SubCell"/>
</dbReference>
<dbReference type="GO" id="GO:0005524">
    <property type="term" value="F:ATP binding"/>
    <property type="evidence" value="ECO:0007669"/>
    <property type="project" value="UniProtKB-KW"/>
</dbReference>
<dbReference type="GO" id="GO:0004683">
    <property type="term" value="F:calcium/calmodulin-dependent protein kinase activity"/>
    <property type="evidence" value="ECO:0000318"/>
    <property type="project" value="GO_Central"/>
</dbReference>
<dbReference type="GO" id="GO:0005516">
    <property type="term" value="F:calmodulin binding"/>
    <property type="evidence" value="ECO:0000318"/>
    <property type="project" value="GO_Central"/>
</dbReference>
<dbReference type="GO" id="GO:0106310">
    <property type="term" value="F:protein serine kinase activity"/>
    <property type="evidence" value="ECO:0007669"/>
    <property type="project" value="RHEA"/>
</dbReference>
<dbReference type="GO" id="GO:0010613">
    <property type="term" value="P:positive regulation of cardiac muscle hypertrophy"/>
    <property type="evidence" value="ECO:0000250"/>
    <property type="project" value="UniProtKB"/>
</dbReference>
<dbReference type="GO" id="GO:0006468">
    <property type="term" value="P:protein phosphorylation"/>
    <property type="evidence" value="ECO:0000250"/>
    <property type="project" value="UniProtKB"/>
</dbReference>
<dbReference type="GO" id="GO:0060341">
    <property type="term" value="P:regulation of cellular localization"/>
    <property type="evidence" value="ECO:0000250"/>
    <property type="project" value="UniProtKB"/>
</dbReference>
<dbReference type="GO" id="GO:0048168">
    <property type="term" value="P:regulation of neuronal synaptic plasticity"/>
    <property type="evidence" value="ECO:0000318"/>
    <property type="project" value="GO_Central"/>
</dbReference>
<dbReference type="GO" id="GO:1903076">
    <property type="term" value="P:regulation of protein localization to plasma membrane"/>
    <property type="evidence" value="ECO:0000318"/>
    <property type="project" value="GO_Central"/>
</dbReference>
<dbReference type="CDD" id="cd14086">
    <property type="entry name" value="STKc_CaMKII"/>
    <property type="match status" value="1"/>
</dbReference>
<dbReference type="FunFam" id="1.10.510.10:FF:000001">
    <property type="entry name" value="Calcium/calmodulin-dependent protein kinase type II subunit delta"/>
    <property type="match status" value="1"/>
</dbReference>
<dbReference type="FunFam" id="3.30.200.20:FF:000002">
    <property type="entry name" value="Calcium/calmodulin-dependent protein kinase type II subunit delta isoform 2"/>
    <property type="match status" value="1"/>
</dbReference>
<dbReference type="FunFam" id="3.10.450.50:FF:000001">
    <property type="entry name" value="calcium/calmodulin-dependent protein kinase type II subunit gamma isoform X1"/>
    <property type="match status" value="1"/>
</dbReference>
<dbReference type="Gene3D" id="3.10.450.50">
    <property type="match status" value="1"/>
</dbReference>
<dbReference type="Gene3D" id="6.10.140.620">
    <property type="match status" value="1"/>
</dbReference>
<dbReference type="Gene3D" id="3.30.200.20">
    <property type="entry name" value="Phosphorylase Kinase, domain 1"/>
    <property type="match status" value="1"/>
</dbReference>
<dbReference type="Gene3D" id="1.10.510.10">
    <property type="entry name" value="Transferase(Phosphotransferase) domain 1"/>
    <property type="match status" value="1"/>
</dbReference>
<dbReference type="InterPro" id="IPR013543">
    <property type="entry name" value="Ca/CaM-dep_prot_kinase-assoc"/>
</dbReference>
<dbReference type="InterPro" id="IPR011009">
    <property type="entry name" value="Kinase-like_dom_sf"/>
</dbReference>
<dbReference type="InterPro" id="IPR032710">
    <property type="entry name" value="NTF2-like_dom_sf"/>
</dbReference>
<dbReference type="InterPro" id="IPR000719">
    <property type="entry name" value="Prot_kinase_dom"/>
</dbReference>
<dbReference type="InterPro" id="IPR017441">
    <property type="entry name" value="Protein_kinase_ATP_BS"/>
</dbReference>
<dbReference type="InterPro" id="IPR008271">
    <property type="entry name" value="Ser/Thr_kinase_AS"/>
</dbReference>
<dbReference type="PANTHER" id="PTHR24347">
    <property type="entry name" value="SERINE/THREONINE-PROTEIN KINASE"/>
    <property type="match status" value="1"/>
</dbReference>
<dbReference type="Pfam" id="PF08332">
    <property type="entry name" value="CaMKII_AD"/>
    <property type="match status" value="1"/>
</dbReference>
<dbReference type="Pfam" id="PF00069">
    <property type="entry name" value="Pkinase"/>
    <property type="match status" value="1"/>
</dbReference>
<dbReference type="SMART" id="SM00220">
    <property type="entry name" value="S_TKc"/>
    <property type="match status" value="1"/>
</dbReference>
<dbReference type="SUPFAM" id="SSF54427">
    <property type="entry name" value="NTF2-like"/>
    <property type="match status" value="1"/>
</dbReference>
<dbReference type="SUPFAM" id="SSF56112">
    <property type="entry name" value="Protein kinase-like (PK-like)"/>
    <property type="match status" value="1"/>
</dbReference>
<dbReference type="PROSITE" id="PS00107">
    <property type="entry name" value="PROTEIN_KINASE_ATP"/>
    <property type="match status" value="1"/>
</dbReference>
<dbReference type="PROSITE" id="PS50011">
    <property type="entry name" value="PROTEIN_KINASE_DOM"/>
    <property type="match status" value="1"/>
</dbReference>
<dbReference type="PROSITE" id="PS00108">
    <property type="entry name" value="PROTEIN_KINASE_ST"/>
    <property type="match status" value="1"/>
</dbReference>
<keyword id="KW-0007">Acetylation</keyword>
<keyword id="KW-0067">ATP-binding</keyword>
<keyword id="KW-0112">Calmodulin-binding</keyword>
<keyword id="KW-1003">Cell membrane</keyword>
<keyword id="KW-0418">Kinase</keyword>
<keyword id="KW-0472">Membrane</keyword>
<keyword id="KW-0547">Nucleotide-binding</keyword>
<keyword id="KW-0597">Phosphoprotein</keyword>
<keyword id="KW-1185">Reference proteome</keyword>
<keyword id="KW-0703">Sarcoplasmic reticulum</keyword>
<keyword id="KW-0723">Serine/threonine-protein kinase</keyword>
<keyword id="KW-0808">Transferase</keyword>
<name>KCC2D_PIG</name>
<gene>
    <name type="primary">CAMK2D</name>
</gene>
<protein>
    <recommendedName>
        <fullName>Calcium/calmodulin-dependent protein kinase type II subunit delta</fullName>
        <shortName>CaM kinase II subunit delta</shortName>
        <shortName>CaMK-II subunit delta</shortName>
        <ecNumber>2.7.11.17</ecNumber>
    </recommendedName>
</protein>
<feature type="initiator methionine" description="Removed" evidence="2">
    <location>
        <position position="1"/>
    </location>
</feature>
<feature type="chain" id="PRO_0000277818" description="Calcium/calmodulin-dependent protein kinase type II subunit delta">
    <location>
        <begin position="2"/>
        <end position="499"/>
    </location>
</feature>
<feature type="domain" description="Protein kinase" evidence="4">
    <location>
        <begin position="14"/>
        <end position="272"/>
    </location>
</feature>
<feature type="region of interest" description="Autoinhibitory domain" evidence="1">
    <location>
        <begin position="283"/>
        <end position="292"/>
    </location>
</feature>
<feature type="region of interest" description="Calmodulin-binding" evidence="1">
    <location>
        <begin position="291"/>
        <end position="301"/>
    </location>
</feature>
<feature type="active site" description="Proton acceptor" evidence="4 5">
    <location>
        <position position="136"/>
    </location>
</feature>
<feature type="binding site" evidence="4">
    <location>
        <begin position="20"/>
        <end position="28"/>
    </location>
    <ligand>
        <name>ATP</name>
        <dbReference type="ChEBI" id="CHEBI:30616"/>
    </ligand>
</feature>
<feature type="binding site" evidence="4">
    <location>
        <position position="43"/>
    </location>
    <ligand>
        <name>ATP</name>
        <dbReference type="ChEBI" id="CHEBI:30616"/>
    </ligand>
</feature>
<feature type="modified residue" description="N-acetylalanine" evidence="2">
    <location>
        <position position="2"/>
    </location>
</feature>
<feature type="modified residue" description="Phosphothreonine; by autocatalysis" evidence="2">
    <location>
        <position position="287"/>
    </location>
</feature>
<feature type="modified residue" description="Phosphothreonine; by autocatalysis" evidence="1">
    <location>
        <position position="306"/>
    </location>
</feature>
<feature type="modified residue" description="Phosphothreonine; by autocatalysis" evidence="1">
    <location>
        <position position="307"/>
    </location>
</feature>
<feature type="modified residue" description="Phosphoserine" evidence="2">
    <location>
        <position position="315"/>
    </location>
</feature>
<feature type="modified residue" description="N6-acetyllysine" evidence="3">
    <location>
        <position position="318"/>
    </location>
</feature>
<feature type="modified residue" description="Phosphoserine" evidence="2">
    <location>
        <position position="319"/>
    </location>
</feature>
<feature type="modified residue" description="Phosphoserine" evidence="2">
    <location>
        <position position="330"/>
    </location>
</feature>
<feature type="modified residue" description="Phosphothreonine" evidence="2">
    <location>
        <position position="331"/>
    </location>
</feature>
<feature type="modified residue" description="Phosphoserine" evidence="3">
    <location>
        <position position="333"/>
    </location>
</feature>
<feature type="modified residue" description="Phosphothreonine" evidence="3">
    <location>
        <position position="336"/>
    </location>
</feature>
<feature type="modified residue" description="Phosphothreonine" evidence="2">
    <location>
        <position position="337"/>
    </location>
</feature>
<feature type="modified residue" description="Phosphoserine" evidence="2">
    <location>
        <position position="404"/>
    </location>
</feature>
<feature type="modified residue" description="Phosphoserine" evidence="2">
    <location>
        <position position="490"/>
    </location>
</feature>
<feature type="modified residue" description="Phosphoserine" evidence="3">
    <location>
        <position position="494"/>
    </location>
</feature>